<reference key="1">
    <citation type="journal article" date="2000" name="Nature">
        <title>The genome sequence of the thermoacidophilic scavenger Thermoplasma acidophilum.</title>
        <authorList>
            <person name="Ruepp A."/>
            <person name="Graml W."/>
            <person name="Santos-Martinez M.-L."/>
            <person name="Koretke K.K."/>
            <person name="Volker C."/>
            <person name="Mewes H.-W."/>
            <person name="Frishman D."/>
            <person name="Stocker S."/>
            <person name="Lupas A.N."/>
            <person name="Baumeister W."/>
        </authorList>
    </citation>
    <scope>NUCLEOTIDE SEQUENCE [LARGE SCALE GENOMIC DNA]</scope>
    <source>
        <strain>ATCC 25905 / DSM 1728 / JCM 9062 / NBRC 15155 / AMRC-C165</strain>
    </source>
</reference>
<feature type="chain" id="PRO_0000095280" description="Adenylosuccinate synthetase">
    <location>
        <begin position="1"/>
        <end position="435"/>
    </location>
</feature>
<feature type="active site" description="Proton acceptor" evidence="1">
    <location>
        <position position="21"/>
    </location>
</feature>
<feature type="active site" description="Proton donor" evidence="1">
    <location>
        <position position="49"/>
    </location>
</feature>
<feature type="binding site" evidence="1">
    <location>
        <begin position="20"/>
        <end position="26"/>
    </location>
    <ligand>
        <name>GTP</name>
        <dbReference type="ChEBI" id="CHEBI:37565"/>
    </ligand>
</feature>
<feature type="binding site" description="in other chain" evidence="1">
    <location>
        <begin position="21"/>
        <end position="24"/>
    </location>
    <ligand>
        <name>IMP</name>
        <dbReference type="ChEBI" id="CHEBI:58053"/>
        <note>ligand shared between dimeric partners</note>
    </ligand>
</feature>
<feature type="binding site" evidence="1">
    <location>
        <position position="21"/>
    </location>
    <ligand>
        <name>Mg(2+)</name>
        <dbReference type="ChEBI" id="CHEBI:18420"/>
    </ligand>
</feature>
<feature type="binding site" description="in other chain" evidence="1">
    <location>
        <begin position="46"/>
        <end position="49"/>
    </location>
    <ligand>
        <name>IMP</name>
        <dbReference type="ChEBI" id="CHEBI:58053"/>
        <note>ligand shared between dimeric partners</note>
    </ligand>
</feature>
<feature type="binding site" evidence="1">
    <location>
        <begin position="48"/>
        <end position="50"/>
    </location>
    <ligand>
        <name>GTP</name>
        <dbReference type="ChEBI" id="CHEBI:37565"/>
    </ligand>
</feature>
<feature type="binding site" evidence="1">
    <location>
        <position position="48"/>
    </location>
    <ligand>
        <name>Mg(2+)</name>
        <dbReference type="ChEBI" id="CHEBI:18420"/>
    </ligand>
</feature>
<feature type="binding site" description="in other chain" evidence="1">
    <location>
        <position position="134"/>
    </location>
    <ligand>
        <name>IMP</name>
        <dbReference type="ChEBI" id="CHEBI:58053"/>
        <note>ligand shared between dimeric partners</note>
    </ligand>
</feature>
<feature type="binding site" evidence="1">
    <location>
        <position position="148"/>
    </location>
    <ligand>
        <name>IMP</name>
        <dbReference type="ChEBI" id="CHEBI:58053"/>
        <note>ligand shared between dimeric partners</note>
    </ligand>
</feature>
<feature type="binding site" description="in other chain" evidence="1">
    <location>
        <position position="229"/>
    </location>
    <ligand>
        <name>IMP</name>
        <dbReference type="ChEBI" id="CHEBI:58053"/>
        <note>ligand shared between dimeric partners</note>
    </ligand>
</feature>
<feature type="binding site" description="in other chain" evidence="1">
    <location>
        <position position="244"/>
    </location>
    <ligand>
        <name>IMP</name>
        <dbReference type="ChEBI" id="CHEBI:58053"/>
        <note>ligand shared between dimeric partners</note>
    </ligand>
</feature>
<feature type="binding site" evidence="1">
    <location>
        <begin position="304"/>
        <end position="310"/>
    </location>
    <ligand>
        <name>substrate</name>
    </ligand>
</feature>
<feature type="binding site" description="in other chain" evidence="1">
    <location>
        <position position="308"/>
    </location>
    <ligand>
        <name>IMP</name>
        <dbReference type="ChEBI" id="CHEBI:58053"/>
        <note>ligand shared between dimeric partners</note>
    </ligand>
</feature>
<feature type="binding site" evidence="1">
    <location>
        <position position="310"/>
    </location>
    <ligand>
        <name>GTP</name>
        <dbReference type="ChEBI" id="CHEBI:37565"/>
    </ligand>
</feature>
<feature type="binding site" evidence="1">
    <location>
        <begin position="336"/>
        <end position="338"/>
    </location>
    <ligand>
        <name>GTP</name>
        <dbReference type="ChEBI" id="CHEBI:37565"/>
    </ligand>
</feature>
<feature type="binding site" evidence="1">
    <location>
        <begin position="422"/>
        <end position="424"/>
    </location>
    <ligand>
        <name>GTP</name>
        <dbReference type="ChEBI" id="CHEBI:37565"/>
    </ligand>
</feature>
<name>PURA_THEAC</name>
<sequence length="435" mass="48247">MVVPNGEGDKTAAVVGLQFGDEGKGKITDYLSGSYDVVVRFNGGTNAGHTVVTDEGTFKFHLLPSGSLRTSYVVLGSGMVIDPVALIPEIEIVRKINPALKIIISRNAHVVTKMHRQIDVEEEKIRSSLMIGTTAQGIGPTYEDKYARTGIRMVDISDIDLIKEKIETMYRMHSNLLANTEFSNLAKREEMAKEIYEAGIKLTGYLDYTEVAIDRLYSQGKRILFEGAQGVFLDPDFGFYPFVTSSNTISASVYTGTGFSLRKVNRIIGVAKAYVSKVGEGPFPTEITGDLAKQLRDLGGEYGTTTGRPRRVGWLDLPMLKYAVRIDDVDEIAITKVDTLGMLDTVKVCRQYLIDGKPIDYVPRDMNTIKKIEPVYDEFEGWGAISDSISGRKISIDQLPSKLVKYIKYIEDQVGKPIGIISMGKERNRTVRIIK</sequence>
<accession>Q9HIH2</accession>
<keyword id="KW-0963">Cytoplasm</keyword>
<keyword id="KW-0342">GTP-binding</keyword>
<keyword id="KW-0436">Ligase</keyword>
<keyword id="KW-0460">Magnesium</keyword>
<keyword id="KW-0479">Metal-binding</keyword>
<keyword id="KW-0547">Nucleotide-binding</keyword>
<keyword id="KW-0658">Purine biosynthesis</keyword>
<keyword id="KW-1185">Reference proteome</keyword>
<organism>
    <name type="scientific">Thermoplasma acidophilum (strain ATCC 25905 / DSM 1728 / JCM 9062 / NBRC 15155 / AMRC-C165)</name>
    <dbReference type="NCBI Taxonomy" id="273075"/>
    <lineage>
        <taxon>Archaea</taxon>
        <taxon>Methanobacteriati</taxon>
        <taxon>Thermoplasmatota</taxon>
        <taxon>Thermoplasmata</taxon>
        <taxon>Thermoplasmatales</taxon>
        <taxon>Thermoplasmataceae</taxon>
        <taxon>Thermoplasma</taxon>
    </lineage>
</organism>
<protein>
    <recommendedName>
        <fullName evidence="1">Adenylosuccinate synthetase</fullName>
        <shortName evidence="1">AMPSase</shortName>
        <shortName evidence="1">AdSS</shortName>
        <ecNumber evidence="1">6.3.4.4</ecNumber>
    </recommendedName>
    <alternativeName>
        <fullName evidence="1">IMP--aspartate ligase</fullName>
    </alternativeName>
</protein>
<gene>
    <name evidence="1" type="primary">purA</name>
    <name type="ordered locus">Ta1367</name>
</gene>
<dbReference type="EC" id="6.3.4.4" evidence="1"/>
<dbReference type="EMBL" id="AL445067">
    <property type="protein sequence ID" value="CAC12488.1"/>
    <property type="status" value="ALT_INIT"/>
    <property type="molecule type" value="Genomic_DNA"/>
</dbReference>
<dbReference type="RefSeq" id="WP_010901774.1">
    <property type="nucleotide sequence ID" value="NC_002578.1"/>
</dbReference>
<dbReference type="SMR" id="Q9HIH2"/>
<dbReference type="FunCoup" id="Q9HIH2">
    <property type="interactions" value="223"/>
</dbReference>
<dbReference type="STRING" id="273075.gene:9572594"/>
<dbReference type="PaxDb" id="273075-Ta1367m"/>
<dbReference type="EnsemblBacteria" id="CAC12488">
    <property type="protein sequence ID" value="CAC12488"/>
    <property type="gene ID" value="CAC12488"/>
</dbReference>
<dbReference type="KEGG" id="tac:Ta1367"/>
<dbReference type="eggNOG" id="arCOG04387">
    <property type="taxonomic scope" value="Archaea"/>
</dbReference>
<dbReference type="HOGENOM" id="CLU_029848_0_0_2"/>
<dbReference type="InParanoid" id="Q9HIH2"/>
<dbReference type="OrthoDB" id="372247at2157"/>
<dbReference type="UniPathway" id="UPA00075">
    <property type="reaction ID" value="UER00335"/>
</dbReference>
<dbReference type="Proteomes" id="UP000001024">
    <property type="component" value="Chromosome"/>
</dbReference>
<dbReference type="GO" id="GO:0005737">
    <property type="term" value="C:cytoplasm"/>
    <property type="evidence" value="ECO:0007669"/>
    <property type="project" value="UniProtKB-SubCell"/>
</dbReference>
<dbReference type="GO" id="GO:0004019">
    <property type="term" value="F:adenylosuccinate synthase activity"/>
    <property type="evidence" value="ECO:0007669"/>
    <property type="project" value="UniProtKB-UniRule"/>
</dbReference>
<dbReference type="GO" id="GO:0005525">
    <property type="term" value="F:GTP binding"/>
    <property type="evidence" value="ECO:0007669"/>
    <property type="project" value="UniProtKB-UniRule"/>
</dbReference>
<dbReference type="GO" id="GO:0000287">
    <property type="term" value="F:magnesium ion binding"/>
    <property type="evidence" value="ECO:0007669"/>
    <property type="project" value="UniProtKB-UniRule"/>
</dbReference>
<dbReference type="GO" id="GO:0044208">
    <property type="term" value="P:'de novo' AMP biosynthetic process"/>
    <property type="evidence" value="ECO:0007669"/>
    <property type="project" value="UniProtKB-UniRule"/>
</dbReference>
<dbReference type="GO" id="GO:0046040">
    <property type="term" value="P:IMP metabolic process"/>
    <property type="evidence" value="ECO:0007669"/>
    <property type="project" value="TreeGrafter"/>
</dbReference>
<dbReference type="CDD" id="cd03108">
    <property type="entry name" value="AdSS"/>
    <property type="match status" value="1"/>
</dbReference>
<dbReference type="FunFam" id="1.10.300.10:FF:000001">
    <property type="entry name" value="Adenylosuccinate synthetase"/>
    <property type="match status" value="1"/>
</dbReference>
<dbReference type="FunFam" id="3.90.170.10:FF:000001">
    <property type="entry name" value="Adenylosuccinate synthetase"/>
    <property type="match status" value="1"/>
</dbReference>
<dbReference type="Gene3D" id="3.40.440.10">
    <property type="entry name" value="Adenylosuccinate Synthetase, subunit A, domain 1"/>
    <property type="match status" value="1"/>
</dbReference>
<dbReference type="Gene3D" id="1.10.300.10">
    <property type="entry name" value="Adenylosuccinate Synthetase, subunit A, domain 2"/>
    <property type="match status" value="1"/>
</dbReference>
<dbReference type="Gene3D" id="3.90.170.10">
    <property type="entry name" value="Adenylosuccinate Synthetase, subunit A, domain 3"/>
    <property type="match status" value="1"/>
</dbReference>
<dbReference type="HAMAP" id="MF_00011">
    <property type="entry name" value="Adenylosucc_synth"/>
    <property type="match status" value="1"/>
</dbReference>
<dbReference type="InterPro" id="IPR018220">
    <property type="entry name" value="Adenylosuccin_syn_GTP-bd"/>
</dbReference>
<dbReference type="InterPro" id="IPR033128">
    <property type="entry name" value="Adenylosuccin_syn_Lys_AS"/>
</dbReference>
<dbReference type="InterPro" id="IPR042109">
    <property type="entry name" value="Adenylosuccinate_synth_dom1"/>
</dbReference>
<dbReference type="InterPro" id="IPR042110">
    <property type="entry name" value="Adenylosuccinate_synth_dom2"/>
</dbReference>
<dbReference type="InterPro" id="IPR042111">
    <property type="entry name" value="Adenylosuccinate_synth_dom3"/>
</dbReference>
<dbReference type="InterPro" id="IPR001114">
    <property type="entry name" value="Adenylosuccinate_synthetase"/>
</dbReference>
<dbReference type="InterPro" id="IPR027417">
    <property type="entry name" value="P-loop_NTPase"/>
</dbReference>
<dbReference type="NCBIfam" id="NF002223">
    <property type="entry name" value="PRK01117.1"/>
    <property type="match status" value="1"/>
</dbReference>
<dbReference type="NCBIfam" id="TIGR00184">
    <property type="entry name" value="purA"/>
    <property type="match status" value="1"/>
</dbReference>
<dbReference type="PANTHER" id="PTHR11846">
    <property type="entry name" value="ADENYLOSUCCINATE SYNTHETASE"/>
    <property type="match status" value="1"/>
</dbReference>
<dbReference type="PANTHER" id="PTHR11846:SF0">
    <property type="entry name" value="ADENYLOSUCCINATE SYNTHETASE"/>
    <property type="match status" value="1"/>
</dbReference>
<dbReference type="Pfam" id="PF00709">
    <property type="entry name" value="Adenylsucc_synt"/>
    <property type="match status" value="1"/>
</dbReference>
<dbReference type="SMART" id="SM00788">
    <property type="entry name" value="Adenylsucc_synt"/>
    <property type="match status" value="1"/>
</dbReference>
<dbReference type="SUPFAM" id="SSF52540">
    <property type="entry name" value="P-loop containing nucleoside triphosphate hydrolases"/>
    <property type="match status" value="1"/>
</dbReference>
<dbReference type="PROSITE" id="PS01266">
    <property type="entry name" value="ADENYLOSUCCIN_SYN_1"/>
    <property type="match status" value="1"/>
</dbReference>
<dbReference type="PROSITE" id="PS00513">
    <property type="entry name" value="ADENYLOSUCCIN_SYN_2"/>
    <property type="match status" value="1"/>
</dbReference>
<proteinExistence type="inferred from homology"/>
<comment type="function">
    <text evidence="1">Plays an important role in the de novo pathway of purine nucleotide biosynthesis. Catalyzes the first committed step in the biosynthesis of AMP from IMP.</text>
</comment>
<comment type="catalytic activity">
    <reaction evidence="1">
        <text>IMP + L-aspartate + GTP = N(6)-(1,2-dicarboxyethyl)-AMP + GDP + phosphate + 2 H(+)</text>
        <dbReference type="Rhea" id="RHEA:15753"/>
        <dbReference type="ChEBI" id="CHEBI:15378"/>
        <dbReference type="ChEBI" id="CHEBI:29991"/>
        <dbReference type="ChEBI" id="CHEBI:37565"/>
        <dbReference type="ChEBI" id="CHEBI:43474"/>
        <dbReference type="ChEBI" id="CHEBI:57567"/>
        <dbReference type="ChEBI" id="CHEBI:58053"/>
        <dbReference type="ChEBI" id="CHEBI:58189"/>
        <dbReference type="EC" id="6.3.4.4"/>
    </reaction>
</comment>
<comment type="cofactor">
    <cofactor evidence="1">
        <name>Mg(2+)</name>
        <dbReference type="ChEBI" id="CHEBI:18420"/>
    </cofactor>
    <text evidence="1">Binds 1 Mg(2+) ion per subunit.</text>
</comment>
<comment type="pathway">
    <text evidence="1">Purine metabolism; AMP biosynthesis via de novo pathway; AMP from IMP: step 1/2.</text>
</comment>
<comment type="subunit">
    <text evidence="1">Homodimer.</text>
</comment>
<comment type="subcellular location">
    <subcellularLocation>
        <location evidence="1">Cytoplasm</location>
    </subcellularLocation>
</comment>
<comment type="similarity">
    <text evidence="1">Belongs to the adenylosuccinate synthetase family.</text>
</comment>
<comment type="sequence caution" evidence="2">
    <conflict type="erroneous initiation">
        <sequence resource="EMBL-CDS" id="CAC12488"/>
    </conflict>
</comment>
<evidence type="ECO:0000255" key="1">
    <source>
        <dbReference type="HAMAP-Rule" id="MF_00011"/>
    </source>
</evidence>
<evidence type="ECO:0000305" key="2"/>